<feature type="chain" id="PRO_0000248657" description="Proline--tRNA ligase">
    <location>
        <begin position="1"/>
        <end position="576"/>
    </location>
</feature>
<accession>Q7VTZ8</accession>
<evidence type="ECO:0000255" key="1">
    <source>
        <dbReference type="HAMAP-Rule" id="MF_01569"/>
    </source>
</evidence>
<gene>
    <name evidence="1" type="primary">proS</name>
    <name type="ordered locus">BP3348</name>
</gene>
<comment type="function">
    <text evidence="1">Catalyzes the attachment of proline to tRNA(Pro) in a two-step reaction: proline is first activated by ATP to form Pro-AMP and then transferred to the acceptor end of tRNA(Pro). As ProRS can inadvertently accommodate and process non-cognate amino acids such as alanine and cysteine, to avoid such errors it has two additional distinct editing activities against alanine. One activity is designated as 'pretransfer' editing and involves the tRNA(Pro)-independent hydrolysis of activated Ala-AMP. The other activity is designated 'posttransfer' editing and involves deacylation of mischarged Ala-tRNA(Pro). The misacylated Cys-tRNA(Pro) is not edited by ProRS.</text>
</comment>
<comment type="catalytic activity">
    <reaction evidence="1">
        <text>tRNA(Pro) + L-proline + ATP = L-prolyl-tRNA(Pro) + AMP + diphosphate</text>
        <dbReference type="Rhea" id="RHEA:14305"/>
        <dbReference type="Rhea" id="RHEA-COMP:9700"/>
        <dbReference type="Rhea" id="RHEA-COMP:9702"/>
        <dbReference type="ChEBI" id="CHEBI:30616"/>
        <dbReference type="ChEBI" id="CHEBI:33019"/>
        <dbReference type="ChEBI" id="CHEBI:60039"/>
        <dbReference type="ChEBI" id="CHEBI:78442"/>
        <dbReference type="ChEBI" id="CHEBI:78532"/>
        <dbReference type="ChEBI" id="CHEBI:456215"/>
        <dbReference type="EC" id="6.1.1.15"/>
    </reaction>
</comment>
<comment type="subunit">
    <text evidence="1">Homodimer.</text>
</comment>
<comment type="subcellular location">
    <subcellularLocation>
        <location evidence="1">Cytoplasm</location>
    </subcellularLocation>
</comment>
<comment type="domain">
    <text evidence="1">Consists of three domains: the N-terminal catalytic domain, the editing domain and the C-terminal anticodon-binding domain.</text>
</comment>
<comment type="similarity">
    <text evidence="1">Belongs to the class-II aminoacyl-tRNA synthetase family. ProS type 1 subfamily.</text>
</comment>
<reference key="1">
    <citation type="journal article" date="2003" name="Nat. Genet.">
        <title>Comparative analysis of the genome sequences of Bordetella pertussis, Bordetella parapertussis and Bordetella bronchiseptica.</title>
        <authorList>
            <person name="Parkhill J."/>
            <person name="Sebaihia M."/>
            <person name="Preston A."/>
            <person name="Murphy L.D."/>
            <person name="Thomson N.R."/>
            <person name="Harris D.E."/>
            <person name="Holden M.T.G."/>
            <person name="Churcher C.M."/>
            <person name="Bentley S.D."/>
            <person name="Mungall K.L."/>
            <person name="Cerdeno-Tarraga A.-M."/>
            <person name="Temple L."/>
            <person name="James K.D."/>
            <person name="Harris B."/>
            <person name="Quail M.A."/>
            <person name="Achtman M."/>
            <person name="Atkin R."/>
            <person name="Baker S."/>
            <person name="Basham D."/>
            <person name="Bason N."/>
            <person name="Cherevach I."/>
            <person name="Chillingworth T."/>
            <person name="Collins M."/>
            <person name="Cronin A."/>
            <person name="Davis P."/>
            <person name="Doggett J."/>
            <person name="Feltwell T."/>
            <person name="Goble A."/>
            <person name="Hamlin N."/>
            <person name="Hauser H."/>
            <person name="Holroyd S."/>
            <person name="Jagels K."/>
            <person name="Leather S."/>
            <person name="Moule S."/>
            <person name="Norberczak H."/>
            <person name="O'Neil S."/>
            <person name="Ormond D."/>
            <person name="Price C."/>
            <person name="Rabbinowitsch E."/>
            <person name="Rutter S."/>
            <person name="Sanders M."/>
            <person name="Saunders D."/>
            <person name="Seeger K."/>
            <person name="Sharp S."/>
            <person name="Simmonds M."/>
            <person name="Skelton J."/>
            <person name="Squares R."/>
            <person name="Squares S."/>
            <person name="Stevens K."/>
            <person name="Unwin L."/>
            <person name="Whitehead S."/>
            <person name="Barrell B.G."/>
            <person name="Maskell D.J."/>
        </authorList>
    </citation>
    <scope>NUCLEOTIDE SEQUENCE [LARGE SCALE GENOMIC DNA]</scope>
    <source>
        <strain>Tohama I / ATCC BAA-589 / NCTC 13251</strain>
    </source>
</reference>
<protein>
    <recommendedName>
        <fullName evidence="1">Proline--tRNA ligase</fullName>
        <ecNumber evidence="1">6.1.1.15</ecNumber>
    </recommendedName>
    <alternativeName>
        <fullName evidence="1">Prolyl-tRNA synthetase</fullName>
        <shortName evidence="1">ProRS</shortName>
    </alternativeName>
</protein>
<dbReference type="EC" id="6.1.1.15" evidence="1"/>
<dbReference type="EMBL" id="BX640421">
    <property type="protein sequence ID" value="CAE43613.1"/>
    <property type="molecule type" value="Genomic_DNA"/>
</dbReference>
<dbReference type="RefSeq" id="NP_881881.1">
    <property type="nucleotide sequence ID" value="NC_002929.2"/>
</dbReference>
<dbReference type="RefSeq" id="WP_003814636.1">
    <property type="nucleotide sequence ID" value="NZ_CP039022.1"/>
</dbReference>
<dbReference type="SMR" id="Q7VTZ8"/>
<dbReference type="STRING" id="257313.BP3348"/>
<dbReference type="PaxDb" id="257313-BP3348"/>
<dbReference type="KEGG" id="bpe:BP3348"/>
<dbReference type="PATRIC" id="fig|257313.5.peg.3628"/>
<dbReference type="eggNOG" id="COG0442">
    <property type="taxonomic scope" value="Bacteria"/>
</dbReference>
<dbReference type="HOGENOM" id="CLU_016739_0_0_4"/>
<dbReference type="Proteomes" id="UP000002676">
    <property type="component" value="Chromosome"/>
</dbReference>
<dbReference type="GO" id="GO:0005829">
    <property type="term" value="C:cytosol"/>
    <property type="evidence" value="ECO:0007669"/>
    <property type="project" value="TreeGrafter"/>
</dbReference>
<dbReference type="GO" id="GO:0002161">
    <property type="term" value="F:aminoacyl-tRNA deacylase activity"/>
    <property type="evidence" value="ECO:0007669"/>
    <property type="project" value="InterPro"/>
</dbReference>
<dbReference type="GO" id="GO:0005524">
    <property type="term" value="F:ATP binding"/>
    <property type="evidence" value="ECO:0007669"/>
    <property type="project" value="UniProtKB-UniRule"/>
</dbReference>
<dbReference type="GO" id="GO:0004827">
    <property type="term" value="F:proline-tRNA ligase activity"/>
    <property type="evidence" value="ECO:0007669"/>
    <property type="project" value="UniProtKB-UniRule"/>
</dbReference>
<dbReference type="GO" id="GO:0006433">
    <property type="term" value="P:prolyl-tRNA aminoacylation"/>
    <property type="evidence" value="ECO:0007669"/>
    <property type="project" value="UniProtKB-UniRule"/>
</dbReference>
<dbReference type="CDD" id="cd04334">
    <property type="entry name" value="ProRS-INS"/>
    <property type="match status" value="1"/>
</dbReference>
<dbReference type="CDD" id="cd00861">
    <property type="entry name" value="ProRS_anticodon_short"/>
    <property type="match status" value="1"/>
</dbReference>
<dbReference type="CDD" id="cd00779">
    <property type="entry name" value="ProRS_core_prok"/>
    <property type="match status" value="1"/>
</dbReference>
<dbReference type="FunFam" id="3.30.930.10:FF:000012">
    <property type="entry name" value="Proline--tRNA ligase"/>
    <property type="match status" value="1"/>
</dbReference>
<dbReference type="FunFam" id="3.30.930.10:FF:000097">
    <property type="entry name" value="Proline--tRNA ligase"/>
    <property type="match status" value="1"/>
</dbReference>
<dbReference type="Gene3D" id="3.40.50.800">
    <property type="entry name" value="Anticodon-binding domain"/>
    <property type="match status" value="1"/>
</dbReference>
<dbReference type="Gene3D" id="3.30.930.10">
    <property type="entry name" value="Bira Bifunctional Protein, Domain 2"/>
    <property type="match status" value="2"/>
</dbReference>
<dbReference type="Gene3D" id="3.90.960.10">
    <property type="entry name" value="YbaK/aminoacyl-tRNA synthetase-associated domain"/>
    <property type="match status" value="1"/>
</dbReference>
<dbReference type="HAMAP" id="MF_01569">
    <property type="entry name" value="Pro_tRNA_synth_type1"/>
    <property type="match status" value="1"/>
</dbReference>
<dbReference type="InterPro" id="IPR002314">
    <property type="entry name" value="aa-tRNA-synt_IIb"/>
</dbReference>
<dbReference type="InterPro" id="IPR006195">
    <property type="entry name" value="aa-tRNA-synth_II"/>
</dbReference>
<dbReference type="InterPro" id="IPR045864">
    <property type="entry name" value="aa-tRNA-synth_II/BPL/LPL"/>
</dbReference>
<dbReference type="InterPro" id="IPR004154">
    <property type="entry name" value="Anticodon-bd"/>
</dbReference>
<dbReference type="InterPro" id="IPR036621">
    <property type="entry name" value="Anticodon-bd_dom_sf"/>
</dbReference>
<dbReference type="InterPro" id="IPR002316">
    <property type="entry name" value="Pro-tRNA-ligase_IIa"/>
</dbReference>
<dbReference type="InterPro" id="IPR004500">
    <property type="entry name" value="Pro-tRNA-synth_IIa_bac-type"/>
</dbReference>
<dbReference type="InterPro" id="IPR023717">
    <property type="entry name" value="Pro-tRNA-Synthase_IIa_type1"/>
</dbReference>
<dbReference type="InterPro" id="IPR050062">
    <property type="entry name" value="Pro-tRNA_synthetase"/>
</dbReference>
<dbReference type="InterPro" id="IPR044140">
    <property type="entry name" value="ProRS_anticodon_short"/>
</dbReference>
<dbReference type="InterPro" id="IPR033730">
    <property type="entry name" value="ProRS_core_prok"/>
</dbReference>
<dbReference type="InterPro" id="IPR036754">
    <property type="entry name" value="YbaK/aa-tRNA-synt-asso_dom_sf"/>
</dbReference>
<dbReference type="InterPro" id="IPR007214">
    <property type="entry name" value="YbaK/aa-tRNA-synth-assoc-dom"/>
</dbReference>
<dbReference type="NCBIfam" id="NF006625">
    <property type="entry name" value="PRK09194.1"/>
    <property type="match status" value="1"/>
</dbReference>
<dbReference type="NCBIfam" id="TIGR00409">
    <property type="entry name" value="proS_fam_II"/>
    <property type="match status" value="1"/>
</dbReference>
<dbReference type="PANTHER" id="PTHR42753">
    <property type="entry name" value="MITOCHONDRIAL RIBOSOME PROTEIN L39/PROLYL-TRNA LIGASE FAMILY MEMBER"/>
    <property type="match status" value="1"/>
</dbReference>
<dbReference type="PANTHER" id="PTHR42753:SF2">
    <property type="entry name" value="PROLINE--TRNA LIGASE"/>
    <property type="match status" value="1"/>
</dbReference>
<dbReference type="Pfam" id="PF03129">
    <property type="entry name" value="HGTP_anticodon"/>
    <property type="match status" value="1"/>
</dbReference>
<dbReference type="Pfam" id="PF00587">
    <property type="entry name" value="tRNA-synt_2b"/>
    <property type="match status" value="1"/>
</dbReference>
<dbReference type="Pfam" id="PF04073">
    <property type="entry name" value="tRNA_edit"/>
    <property type="match status" value="1"/>
</dbReference>
<dbReference type="PIRSF" id="PIRSF001535">
    <property type="entry name" value="ProRS_1"/>
    <property type="match status" value="1"/>
</dbReference>
<dbReference type="PRINTS" id="PR01046">
    <property type="entry name" value="TRNASYNTHPRO"/>
</dbReference>
<dbReference type="SUPFAM" id="SSF52954">
    <property type="entry name" value="Class II aaRS ABD-related"/>
    <property type="match status" value="1"/>
</dbReference>
<dbReference type="SUPFAM" id="SSF55681">
    <property type="entry name" value="Class II aaRS and biotin synthetases"/>
    <property type="match status" value="1"/>
</dbReference>
<dbReference type="SUPFAM" id="SSF55826">
    <property type="entry name" value="YbaK/ProRS associated domain"/>
    <property type="match status" value="1"/>
</dbReference>
<dbReference type="PROSITE" id="PS50862">
    <property type="entry name" value="AA_TRNA_LIGASE_II"/>
    <property type="match status" value="1"/>
</dbReference>
<organism>
    <name type="scientific">Bordetella pertussis (strain Tohama I / ATCC BAA-589 / NCTC 13251)</name>
    <dbReference type="NCBI Taxonomy" id="257313"/>
    <lineage>
        <taxon>Bacteria</taxon>
        <taxon>Pseudomonadati</taxon>
        <taxon>Pseudomonadota</taxon>
        <taxon>Betaproteobacteria</taxon>
        <taxon>Burkholderiales</taxon>
        <taxon>Alcaligenaceae</taxon>
        <taxon>Bordetella</taxon>
    </lineage>
</organism>
<sequence length="576" mass="63743">MRASKYHLNTLKEAPAEAEIASHQLMTRAGMIRKLAGGIYTYMPLGLKVIRKIEGIVREEMNAAGAIELLMPVVQPAELWMESGRWEQYGAELLRIKDRHQRDFVLQPTSEEVITDIARNEIQSYRQLPLNFYHIQTKFRDERRPRFGLMRGREFTMKDAYSFDRDEAGAQRSYDIMYAAYQRIFQRLGLEFRAVAADTGSIGGSRSHEFQVIADTGEDLIVYNPESDYAANIELAEAPALLATRAAPGQDLEAVPTPGAAKCEDVAKLLDLPLARTIKSIVLAVDQPEGPAQVWLLLLRGDHELNEIKAGKLPGLAGFRFATETEILDHFGCKPGYLGPIKTARPVHVVADRTVANMADFVCGANREDYHYQGANWGRDLPEPELVADLRNVVEGDPSPDGKGALSIQRGIEVGHVFFLGTKYSEALKATFLDDNGKPAVLQMGCYGIGVTRIVGAAIEQNHDARGIIWPRAIAPYEVVICPVGWGKSETVRDTALALYEALRARGVDVMLDDRDSRPGVMFAEWELIGVPLRVTVGERGLNEGVVELQARREAEAAKVPVDQALAQTLAKLDLL</sequence>
<proteinExistence type="inferred from homology"/>
<keyword id="KW-0030">Aminoacyl-tRNA synthetase</keyword>
<keyword id="KW-0067">ATP-binding</keyword>
<keyword id="KW-0963">Cytoplasm</keyword>
<keyword id="KW-0436">Ligase</keyword>
<keyword id="KW-0547">Nucleotide-binding</keyword>
<keyword id="KW-0648">Protein biosynthesis</keyword>
<keyword id="KW-1185">Reference proteome</keyword>
<name>SYP_BORPE</name>